<feature type="transit peptide" description="Mitochondrion" evidence="2">
    <location>
        <begin position="1"/>
        <end position="38"/>
    </location>
</feature>
<feature type="chain" id="PRO_0000404467" description="ATPase synthesis protein 25, mitochondrial">
    <location>
        <begin position="39"/>
        <end position="577"/>
    </location>
</feature>
<proteinExistence type="inferred from homology"/>
<dbReference type="EMBL" id="GG692395">
    <property type="protein sequence ID" value="EER36026.1"/>
    <property type="molecule type" value="Genomic_DNA"/>
</dbReference>
<dbReference type="RefSeq" id="XP_002545984.1">
    <property type="nucleotide sequence ID" value="XM_002545938.1"/>
</dbReference>
<dbReference type="SMR" id="C5M3X6"/>
<dbReference type="STRING" id="294747.C5M3X6"/>
<dbReference type="EnsemblFungi" id="CTRG_00765-t43_1">
    <property type="protein sequence ID" value="CTRG_00765-t43_1-p1"/>
    <property type="gene ID" value="CTRG_00765"/>
</dbReference>
<dbReference type="GeneID" id="8298977"/>
<dbReference type="KEGG" id="ctp:CTRG_00765"/>
<dbReference type="VEuPathDB" id="FungiDB:CTRG_00765"/>
<dbReference type="eggNOG" id="ENOG502RGZN">
    <property type="taxonomic scope" value="Eukaryota"/>
</dbReference>
<dbReference type="HOGENOM" id="CLU_454918_0_0_1"/>
<dbReference type="OrthoDB" id="107372at2759"/>
<dbReference type="Proteomes" id="UP000002037">
    <property type="component" value="Unassembled WGS sequence"/>
</dbReference>
<dbReference type="GO" id="GO:0005743">
    <property type="term" value="C:mitochondrial inner membrane"/>
    <property type="evidence" value="ECO:0007669"/>
    <property type="project" value="UniProtKB-SubCell"/>
</dbReference>
<dbReference type="GO" id="GO:0140053">
    <property type="term" value="P:mitochondrial gene expression"/>
    <property type="evidence" value="ECO:0007669"/>
    <property type="project" value="InterPro"/>
</dbReference>
<dbReference type="GO" id="GO:0048255">
    <property type="term" value="P:mRNA stabilization"/>
    <property type="evidence" value="ECO:0007669"/>
    <property type="project" value="TreeGrafter"/>
</dbReference>
<dbReference type="Gene3D" id="3.30.460.10">
    <property type="entry name" value="Beta Polymerase, domain 2"/>
    <property type="match status" value="1"/>
</dbReference>
<dbReference type="InterPro" id="IPR040152">
    <property type="entry name" value="Atp25"/>
</dbReference>
<dbReference type="InterPro" id="IPR043519">
    <property type="entry name" value="NT_sf"/>
</dbReference>
<dbReference type="PANTHER" id="PTHR28087">
    <property type="entry name" value="ATPASE SYNTHESIS PROTEIN 25, MITOCHONDRIAL"/>
    <property type="match status" value="1"/>
</dbReference>
<dbReference type="PANTHER" id="PTHR28087:SF1">
    <property type="entry name" value="ATPASE SYNTHESIS PROTEIN 25, MITOCHONDRIAL"/>
    <property type="match status" value="1"/>
</dbReference>
<dbReference type="Pfam" id="PF02410">
    <property type="entry name" value="RsfS"/>
    <property type="match status" value="1"/>
</dbReference>
<dbReference type="SUPFAM" id="SSF81301">
    <property type="entry name" value="Nucleotidyltransferase"/>
    <property type="match status" value="1"/>
</dbReference>
<accession>C5M3X6</accession>
<sequence length="577" mass="66539">MIARGRVLNDTALKSKAMFGFTVLKLVSRHIHHTPIIFQEKKDAQVDLGVPWYLRQENSPPVEEIKKVEIPELPESAPGSLSELVHLIAEEYGIVDVEVFDLATLPEDHPKSVDVQSYDKYIILGTGKSEKHLYKAAYELKQYIKHHHDCMPVIEGMVSNSIGKVARRRLAKRVSRGPPATHSTYGIGANTWVSCDTGVDGITIHMLTKERRQEMNLEQLYSDAPDYESNRYTNNIDDDDIFYGIKRGFHTSTRVFNKADQLKVVYDELLENGKTKSLAKFKAQFDNLFSGASVEEYNRKVDFYKVISLMDEQLVTAEQVECIFKDKYSSLLLAQEQGIDWHMEVTNDIIKYMELLADVGDQYTPAQKLNKLSEFVSDMTNFTGDSVQLFSIDKFNALLWNLTTKSTFNQLDSAGIREVINTKGKFEPVVGKVEQDAKIERCVKELTRRSLPKEVFPLWFREQMMYTYGQTGAWDKFWKEFQSLVQSIGSSKDRVYFWVTTLIFLSKVNNRDALRTYFTKYWSSPSGYSFLKDFEKNDNRFNSDNERIVFKRTVQDIQNSYGSSPWKDEAVEFVENL</sequence>
<name>ATP25_CANTT</name>
<organism>
    <name type="scientific">Candida tropicalis (strain ATCC MYA-3404 / T1)</name>
    <name type="common">Yeast</name>
    <dbReference type="NCBI Taxonomy" id="294747"/>
    <lineage>
        <taxon>Eukaryota</taxon>
        <taxon>Fungi</taxon>
        <taxon>Dikarya</taxon>
        <taxon>Ascomycota</taxon>
        <taxon>Saccharomycotina</taxon>
        <taxon>Pichiomycetes</taxon>
        <taxon>Debaryomycetaceae</taxon>
        <taxon>Candida/Lodderomyces clade</taxon>
        <taxon>Candida</taxon>
    </lineage>
</organism>
<gene>
    <name type="primary">ATP25</name>
    <name type="ORF">CTRG_00765</name>
</gene>
<reference key="1">
    <citation type="journal article" date="2009" name="Nature">
        <title>Evolution of pathogenicity and sexual reproduction in eight Candida genomes.</title>
        <authorList>
            <person name="Butler G."/>
            <person name="Rasmussen M.D."/>
            <person name="Lin M.F."/>
            <person name="Santos M.A.S."/>
            <person name="Sakthikumar S."/>
            <person name="Munro C.A."/>
            <person name="Rheinbay E."/>
            <person name="Grabherr M."/>
            <person name="Forche A."/>
            <person name="Reedy J.L."/>
            <person name="Agrafioti I."/>
            <person name="Arnaud M.B."/>
            <person name="Bates S."/>
            <person name="Brown A.J.P."/>
            <person name="Brunke S."/>
            <person name="Costanzo M.C."/>
            <person name="Fitzpatrick D.A."/>
            <person name="de Groot P.W.J."/>
            <person name="Harris D."/>
            <person name="Hoyer L.L."/>
            <person name="Hube B."/>
            <person name="Klis F.M."/>
            <person name="Kodira C."/>
            <person name="Lennard N."/>
            <person name="Logue M.E."/>
            <person name="Martin R."/>
            <person name="Neiman A.M."/>
            <person name="Nikolaou E."/>
            <person name="Quail M.A."/>
            <person name="Quinn J."/>
            <person name="Santos M.C."/>
            <person name="Schmitzberger F.F."/>
            <person name="Sherlock G."/>
            <person name="Shah P."/>
            <person name="Silverstein K.A.T."/>
            <person name="Skrzypek M.S."/>
            <person name="Soll D."/>
            <person name="Staggs R."/>
            <person name="Stansfield I."/>
            <person name="Stumpf M.P.H."/>
            <person name="Sudbery P.E."/>
            <person name="Srikantha T."/>
            <person name="Zeng Q."/>
            <person name="Berman J."/>
            <person name="Berriman M."/>
            <person name="Heitman J."/>
            <person name="Gow N.A.R."/>
            <person name="Lorenz M.C."/>
            <person name="Birren B.W."/>
            <person name="Kellis M."/>
            <person name="Cuomo C.A."/>
        </authorList>
    </citation>
    <scope>NUCLEOTIDE SEQUENCE [LARGE SCALE GENOMIC DNA]</scope>
    <source>
        <strain>ATCC MYA-3404 / T1</strain>
    </source>
</reference>
<protein>
    <recommendedName>
        <fullName>ATPase synthesis protein 25, mitochondrial</fullName>
    </recommendedName>
</protein>
<evidence type="ECO:0000250" key="1"/>
<evidence type="ECO:0000255" key="2"/>
<evidence type="ECO:0000305" key="3"/>
<keyword id="KW-0472">Membrane</keyword>
<keyword id="KW-0496">Mitochondrion</keyword>
<keyword id="KW-0999">Mitochondrion inner membrane</keyword>
<keyword id="KW-1185">Reference proteome</keyword>
<keyword id="KW-0809">Transit peptide</keyword>
<comment type="function">
    <text evidence="1">Probable mitochondrial mRNA stabilization factor.</text>
</comment>
<comment type="subcellular location">
    <subcellularLocation>
        <location evidence="1">Mitochondrion inner membrane</location>
        <topology evidence="1">Peripheral membrane protein</topology>
        <orientation evidence="1">Matrix side</orientation>
    </subcellularLocation>
</comment>
<comment type="similarity">
    <text evidence="3">Belongs to the ATP25 family.</text>
</comment>